<gene>
    <name type="ORF">DDB_G0288509</name>
</gene>
<accession>Q54IU7</accession>
<protein>
    <recommendedName>
        <fullName>Probable arylamine N-acetyltransferase 3</fullName>
        <ecNumber>2.3.1.5</ecNumber>
    </recommendedName>
    <alternativeName>
        <fullName>Arylamide acetylase 3</fullName>
    </alternativeName>
    <alternativeName>
        <fullName>N-acetyltransferase type 3</fullName>
        <shortName>NAT-3</shortName>
    </alternativeName>
</protein>
<organism>
    <name type="scientific">Dictyostelium discoideum</name>
    <name type="common">Social amoeba</name>
    <dbReference type="NCBI Taxonomy" id="44689"/>
    <lineage>
        <taxon>Eukaryota</taxon>
        <taxon>Amoebozoa</taxon>
        <taxon>Evosea</taxon>
        <taxon>Eumycetozoa</taxon>
        <taxon>Dictyostelia</taxon>
        <taxon>Dictyosteliales</taxon>
        <taxon>Dictyosteliaceae</taxon>
        <taxon>Dictyostelium</taxon>
    </lineage>
</organism>
<proteinExistence type="inferred from homology"/>
<keyword id="KW-0012">Acyltransferase</keyword>
<keyword id="KW-1185">Reference proteome</keyword>
<keyword id="KW-0808">Transferase</keyword>
<sequence>MEAISIFSDYQLQFFKRIGMKPKPIETLDDVSDVMKACSNVFSFENLDIVSNSCEPLNKDVLIKQVICNNQGGLCYKINTLLYHFLLEFGFKIHIIRGSVENQETHSDWNIPTGHMINIINFENRLYVVDVAFGCNLSLRPIPITDDGSEVVESCTGLYRVRKVENCVSGKYNYTHILEHRKLDSFLIESGKTWVTGYAFDPLLIVDNNNNNEKTTHQTLVQQLVIDDPTKEFSTKPLATKIVNDGSSFSIATLTANSFTLTDCKTGQKTKTNFDNDKSSFEQFNQHLISIFNLPPLKTIPPIFLN</sequence>
<reference key="1">
    <citation type="journal article" date="2005" name="Nature">
        <title>The genome of the social amoeba Dictyostelium discoideum.</title>
        <authorList>
            <person name="Eichinger L."/>
            <person name="Pachebat J.A."/>
            <person name="Gloeckner G."/>
            <person name="Rajandream M.A."/>
            <person name="Sucgang R."/>
            <person name="Berriman M."/>
            <person name="Song J."/>
            <person name="Olsen R."/>
            <person name="Szafranski K."/>
            <person name="Xu Q."/>
            <person name="Tunggal B."/>
            <person name="Kummerfeld S."/>
            <person name="Madera M."/>
            <person name="Konfortov B.A."/>
            <person name="Rivero F."/>
            <person name="Bankier A.T."/>
            <person name="Lehmann R."/>
            <person name="Hamlin N."/>
            <person name="Davies R."/>
            <person name="Gaudet P."/>
            <person name="Fey P."/>
            <person name="Pilcher K."/>
            <person name="Chen G."/>
            <person name="Saunders D."/>
            <person name="Sodergren E.J."/>
            <person name="Davis P."/>
            <person name="Kerhornou A."/>
            <person name="Nie X."/>
            <person name="Hall N."/>
            <person name="Anjard C."/>
            <person name="Hemphill L."/>
            <person name="Bason N."/>
            <person name="Farbrother P."/>
            <person name="Desany B."/>
            <person name="Just E."/>
            <person name="Morio T."/>
            <person name="Rost R."/>
            <person name="Churcher C.M."/>
            <person name="Cooper J."/>
            <person name="Haydock S."/>
            <person name="van Driessche N."/>
            <person name="Cronin A."/>
            <person name="Goodhead I."/>
            <person name="Muzny D.M."/>
            <person name="Mourier T."/>
            <person name="Pain A."/>
            <person name="Lu M."/>
            <person name="Harper D."/>
            <person name="Lindsay R."/>
            <person name="Hauser H."/>
            <person name="James K.D."/>
            <person name="Quiles M."/>
            <person name="Madan Babu M."/>
            <person name="Saito T."/>
            <person name="Buchrieser C."/>
            <person name="Wardroper A."/>
            <person name="Felder M."/>
            <person name="Thangavelu M."/>
            <person name="Johnson D."/>
            <person name="Knights A."/>
            <person name="Loulseged H."/>
            <person name="Mungall K.L."/>
            <person name="Oliver K."/>
            <person name="Price C."/>
            <person name="Quail M.A."/>
            <person name="Urushihara H."/>
            <person name="Hernandez J."/>
            <person name="Rabbinowitsch E."/>
            <person name="Steffen D."/>
            <person name="Sanders M."/>
            <person name="Ma J."/>
            <person name="Kohara Y."/>
            <person name="Sharp S."/>
            <person name="Simmonds M.N."/>
            <person name="Spiegler S."/>
            <person name="Tivey A."/>
            <person name="Sugano S."/>
            <person name="White B."/>
            <person name="Walker D."/>
            <person name="Woodward J.R."/>
            <person name="Winckler T."/>
            <person name="Tanaka Y."/>
            <person name="Shaulsky G."/>
            <person name="Schleicher M."/>
            <person name="Weinstock G.M."/>
            <person name="Rosenthal A."/>
            <person name="Cox E.C."/>
            <person name="Chisholm R.L."/>
            <person name="Gibbs R.A."/>
            <person name="Loomis W.F."/>
            <person name="Platzer M."/>
            <person name="Kay R.R."/>
            <person name="Williams J.G."/>
            <person name="Dear P.H."/>
            <person name="Noegel A.A."/>
            <person name="Barrell B.G."/>
            <person name="Kuspa A."/>
        </authorList>
    </citation>
    <scope>NUCLEOTIDE SEQUENCE [LARGE SCALE GENOMIC DNA]</scope>
    <source>
        <strain>AX4</strain>
    </source>
</reference>
<feature type="chain" id="PRO_0000327946" description="Probable arylamine N-acetyltransferase 3">
    <location>
        <begin position="1"/>
        <end position="306"/>
    </location>
</feature>
<feature type="active site" description="Acyl-thioester intermediate" evidence="1">
    <location>
        <position position="75"/>
    </location>
</feature>
<feature type="active site" evidence="1">
    <location>
        <position position="115"/>
    </location>
</feature>
<feature type="active site" evidence="1">
    <location>
        <position position="130"/>
    </location>
</feature>
<dbReference type="EC" id="2.3.1.5"/>
<dbReference type="EMBL" id="AAFI02000113">
    <property type="protein sequence ID" value="EAL63188.1"/>
    <property type="molecule type" value="Genomic_DNA"/>
</dbReference>
<dbReference type="RefSeq" id="XP_636691.1">
    <property type="nucleotide sequence ID" value="XM_631599.1"/>
</dbReference>
<dbReference type="SMR" id="Q54IU7"/>
<dbReference type="FunCoup" id="Q54IU7">
    <property type="interactions" value="2"/>
</dbReference>
<dbReference type="PaxDb" id="44689-DDB0267114"/>
<dbReference type="EnsemblProtists" id="EAL63188">
    <property type="protein sequence ID" value="EAL63188"/>
    <property type="gene ID" value="DDB_G0288509"/>
</dbReference>
<dbReference type="GeneID" id="8626663"/>
<dbReference type="KEGG" id="ddi:DDB_G0288509"/>
<dbReference type="dictyBase" id="DDB_G0288509">
    <property type="gene designation" value="nat1"/>
</dbReference>
<dbReference type="VEuPathDB" id="AmoebaDB:DDB_G0288509"/>
<dbReference type="eggNOG" id="ENOG502RI6E">
    <property type="taxonomic scope" value="Eukaryota"/>
</dbReference>
<dbReference type="HOGENOM" id="CLU_049918_4_0_1"/>
<dbReference type="InParanoid" id="Q54IU7"/>
<dbReference type="OMA" id="HCIAMIT"/>
<dbReference type="PhylomeDB" id="Q54IU7"/>
<dbReference type="PRO" id="PR:Q54IU7"/>
<dbReference type="Proteomes" id="UP000002195">
    <property type="component" value="Chromosome 5"/>
</dbReference>
<dbReference type="GO" id="GO:0004060">
    <property type="term" value="F:arylamine N-acetyltransferase activity"/>
    <property type="evidence" value="ECO:0007669"/>
    <property type="project" value="UniProtKB-EC"/>
</dbReference>
<dbReference type="FunFam" id="3.30.2140.20:FF:000002">
    <property type="entry name" value="Arylamine N-acetyltransferase"/>
    <property type="match status" value="1"/>
</dbReference>
<dbReference type="Gene3D" id="3.30.2140.20">
    <property type="match status" value="1"/>
</dbReference>
<dbReference type="InterPro" id="IPR001447">
    <property type="entry name" value="Arylamine_N-AcTrfase"/>
</dbReference>
<dbReference type="InterPro" id="IPR053710">
    <property type="entry name" value="Arylamine_NAT_domain_sf"/>
</dbReference>
<dbReference type="InterPro" id="IPR038765">
    <property type="entry name" value="Papain-like_cys_pep_sf"/>
</dbReference>
<dbReference type="PANTHER" id="PTHR11786:SF9">
    <property type="entry name" value="ARYLAMINE N-ACETYLTRANSFERASE 1-RELATED"/>
    <property type="match status" value="1"/>
</dbReference>
<dbReference type="PANTHER" id="PTHR11786">
    <property type="entry name" value="N-HYDROXYARYLAMINE O-ACETYLTRANSFERASE"/>
    <property type="match status" value="1"/>
</dbReference>
<dbReference type="Pfam" id="PF00797">
    <property type="entry name" value="Acetyltransf_2"/>
    <property type="match status" value="1"/>
</dbReference>
<dbReference type="PRINTS" id="PR01543">
    <property type="entry name" value="ANATRNSFRASE"/>
</dbReference>
<dbReference type="SUPFAM" id="SSF54001">
    <property type="entry name" value="Cysteine proteinases"/>
    <property type="match status" value="1"/>
</dbReference>
<name>ARY3_DICDI</name>
<evidence type="ECO:0000250" key="1"/>
<evidence type="ECO:0000305" key="2"/>
<comment type="catalytic activity">
    <reaction>
        <text>an arylamine + acetyl-CoA = an N-acetylarylamine + CoA</text>
        <dbReference type="Rhea" id="RHEA:16613"/>
        <dbReference type="ChEBI" id="CHEBI:13790"/>
        <dbReference type="ChEBI" id="CHEBI:50471"/>
        <dbReference type="ChEBI" id="CHEBI:57287"/>
        <dbReference type="ChEBI" id="CHEBI:57288"/>
        <dbReference type="EC" id="2.3.1.5"/>
    </reaction>
</comment>
<comment type="similarity">
    <text evidence="2">Belongs to the arylamine N-acetyltransferase family.</text>
</comment>